<feature type="chain" id="PRO_0000129498" description="DCN1-like protein 1">
    <location>
        <begin position="1"/>
        <end position="259"/>
    </location>
</feature>
<feature type="domain" description="UBA-like">
    <location>
        <begin position="8"/>
        <end position="45"/>
    </location>
</feature>
<feature type="domain" description="DCUN1" evidence="2">
    <location>
        <begin position="60"/>
        <end position="248"/>
    </location>
</feature>
<feature type="site" description="Essential for interaction with UBE2M" evidence="11">
    <location>
        <position position="115"/>
    </location>
</feature>
<feature type="modified residue" description="N-acetylmethionine" evidence="20">
    <location>
        <position position="1"/>
    </location>
</feature>
<feature type="mutagenesis site" description="Loss of ubiquitin binding; when associated with A-16, A-44 and A-45." evidence="12">
    <original>F</original>
    <variation>A</variation>
    <location>
        <position position="15"/>
    </location>
</feature>
<feature type="mutagenesis site" description="Loss of ubiquitin binding; when associated with A-15, A-44 and A-45." evidence="12">
    <original>M</original>
    <variation>A</variation>
    <location>
        <position position="16"/>
    </location>
</feature>
<feature type="mutagenesis site" description="Loss of ubiquitin binding; when associated with A-15, A-16 and A-45." evidence="12">
    <original>F</original>
    <variation>A</variation>
    <location>
        <position position="44"/>
    </location>
</feature>
<feature type="mutagenesis site" description="Loss of ubiquitin binding; when associated with A-15, A-16 and A-44." evidence="12">
    <original>F</original>
    <variation>A</variation>
    <location>
        <position position="45"/>
    </location>
</feature>
<feature type="mutagenesis site" description="Loss of ability to stimulate cullin neddylation." evidence="11">
    <original>C</original>
    <variation>A</variation>
    <variation>G</variation>
    <variation>I</variation>
    <variation>L</variation>
    <variation>T</variation>
    <variation>V</variation>
    <location>
        <position position="115"/>
    </location>
</feature>
<feature type="mutagenesis site" description="Loss of interaction with CUL1, CUL2, CUL3, CULA4, CULA5 CAND1 and RBX1; when associated with R-235 and A-241. Does not affect both nucleus and cytoplasm localization; when associated with R-235 and A-241. Reduces cullin neddylation; when associated with R-235 and A-241. Loss of interaction with CUL1, CUL2, CUL3, CULA4 and CULA4; when associated with R-235 and A-241. Loss of CUL2 interaction; when associated with R-235 and A-241. Reduces neddylation on CUL2; when associated with R-235 and A-241. Reduces interaction with VHL and HIF1A; when associated with R-235 and A-241. Does not affect interaction with SOCS1; when associated with R-235 and A-241. Does not affect DCUN1D1 monoubiquitylation; when associated with R-235 and A-241." evidence="8 10 12">
    <original>D</original>
    <variation>A</variation>
    <location>
        <position position="211"/>
    </location>
</feature>
<feature type="mutagenesis site" description="Loss of interaction with CUL1, CUL2, CUL3, CULA4, CULA5 CAND1 and RBX1; when associated with A-211 and A-241. Does not affect both nucleus and cytoplasm localization; when associated with A-211 and A-241. Reduces cullin neddylation; when associated with A-211 and A-241. Loss of interaction with CUL1, CUL2, CUL3, CULA4 and CULA4; when associated with A-211 and A-241. Loss of CUL2 interaction; when associated with A-211 and A-241. Reduces neddylation on CUL2; when associated with A-211 and A-241. Reduces interaction with VHL and HIF1A; when associated with A-211 and A-241. Does not affect interaction with SOCS1; when associated with A-211 and A-241. Does not affect DCUN1D1 monoubiquitylation; when associated with A-211 and A-241." evidence="8 10 12">
    <original>A</original>
    <variation>R</variation>
    <location>
        <position position="235"/>
    </location>
</feature>
<feature type="mutagenesis site" description="Loss of interaction with CUL1, CUL2, CUL3, CULA4, CULA5 CAND1 and RBX1; when associated with A-211 and R-235. Does not affect both nucleus and cytoplasm localization; when associated withA-211 and R-235. Reduces cullin neddylation; when associated with A-211 and R-235. Loss of interaction with CUL1, CUL2, CUL3, CULA4 and CULA4; when associated with A-211 and R-235. Loss of CUL2 interaction; when associated with A-211 and R-235. Reduces neddylation on CUL2; when associated with A-211 and R-235. Reduces interaction with VHL and HIF1A; when associated with A-211 and R-235. Does not affect interaction with SOCS1; when associated with A-211 and R-235. Does not affect DCUN1D1 monoubiquitylation; when associated with A-211 and R-235." evidence="8 10 12">
    <original>D</original>
    <variation>A</variation>
    <location>
        <position position="241"/>
    </location>
</feature>
<feature type="mutagenesis site" description="Loss of binding to CAND1 and CUL-RBX1 complex but retains binding to UBE2M." evidence="4">
    <original>D</original>
    <variation>N</variation>
    <location>
        <position position="241"/>
    </location>
</feature>
<feature type="sequence conflict" description="In Ref. 2; AAL78673." evidence="15" ref="2">
    <original>I</original>
    <variation>T</variation>
    <location>
        <position position="134"/>
    </location>
</feature>
<feature type="sequence conflict" description="In Ref. 1; AAG00606." evidence="15" ref="1">
    <original>K</original>
    <variation>Q</variation>
    <location>
        <position position="136"/>
    </location>
</feature>
<feature type="sequence conflict" description="In Ref. 2; AAL78673." evidence="15" ref="2">
    <original>KF</original>
    <variation>RL</variation>
    <location>
        <begin position="191"/>
        <end position="192"/>
    </location>
</feature>
<feature type="helix" evidence="22">
    <location>
        <begin position="62"/>
        <end position="72"/>
    </location>
</feature>
<feature type="strand" evidence="22">
    <location>
        <begin position="77"/>
        <end position="81"/>
    </location>
</feature>
<feature type="helix" evidence="22">
    <location>
        <begin position="83"/>
        <end position="92"/>
    </location>
</feature>
<feature type="strand" evidence="25">
    <location>
        <begin position="97"/>
        <end position="99"/>
    </location>
</feature>
<feature type="helix" evidence="22">
    <location>
        <begin position="100"/>
        <end position="108"/>
    </location>
</feature>
<feature type="strand" evidence="21">
    <location>
        <begin position="116"/>
        <end position="118"/>
    </location>
</feature>
<feature type="helix" evidence="22">
    <location>
        <begin position="119"/>
        <end position="128"/>
    </location>
</feature>
<feature type="helix" evidence="22">
    <location>
        <begin position="134"/>
        <end position="147"/>
    </location>
</feature>
<feature type="strand" evidence="21">
    <location>
        <begin position="148"/>
        <end position="151"/>
    </location>
</feature>
<feature type="helix" evidence="22">
    <location>
        <begin position="153"/>
        <end position="165"/>
    </location>
</feature>
<feature type="strand" evidence="22">
    <location>
        <begin position="171"/>
        <end position="174"/>
    </location>
</feature>
<feature type="helix" evidence="22">
    <location>
        <begin position="175"/>
        <end position="186"/>
    </location>
</feature>
<feature type="turn" evidence="22">
    <location>
        <begin position="187"/>
        <end position="189"/>
    </location>
</feature>
<feature type="helix" evidence="22">
    <location>
        <begin position="193"/>
        <end position="202"/>
    </location>
</feature>
<feature type="helix" evidence="22">
    <location>
        <begin position="210"/>
        <end position="222"/>
    </location>
</feature>
<feature type="strand" evidence="24">
    <location>
        <begin position="234"/>
        <end position="236"/>
    </location>
</feature>
<feature type="helix" evidence="22">
    <location>
        <begin position="238"/>
        <end position="247"/>
    </location>
</feature>
<feature type="helix" evidence="23">
    <location>
        <begin position="248"/>
        <end position="255"/>
    </location>
</feature>
<keyword id="KW-0002">3D-structure</keyword>
<keyword id="KW-0007">Acetylation</keyword>
<keyword id="KW-0963">Cytoplasm</keyword>
<keyword id="KW-0539">Nucleus</keyword>
<keyword id="KW-1267">Proteomics identification</keyword>
<keyword id="KW-0656">Proto-oncogene</keyword>
<keyword id="KW-1185">Reference proteome</keyword>
<keyword id="KW-0832">Ubl conjugation</keyword>
<keyword id="KW-0833">Ubl conjugation pathway</keyword>
<evidence type="ECO:0000250" key="1">
    <source>
        <dbReference type="UniProtKB" id="Q9QZ73"/>
    </source>
</evidence>
<evidence type="ECO:0000255" key="2">
    <source>
        <dbReference type="PROSITE-ProRule" id="PRU00574"/>
    </source>
</evidence>
<evidence type="ECO:0000269" key="3">
    <source>
    </source>
</evidence>
<evidence type="ECO:0000269" key="4">
    <source>
    </source>
</evidence>
<evidence type="ECO:0000269" key="5">
    <source>
    </source>
</evidence>
<evidence type="ECO:0000269" key="6">
    <source>
    </source>
</evidence>
<evidence type="ECO:0000269" key="7">
    <source>
    </source>
</evidence>
<evidence type="ECO:0000269" key="8">
    <source>
    </source>
</evidence>
<evidence type="ECO:0000269" key="9">
    <source>
    </source>
</evidence>
<evidence type="ECO:0000269" key="10">
    <source>
    </source>
</evidence>
<evidence type="ECO:0000269" key="11">
    <source>
    </source>
</evidence>
<evidence type="ECO:0000269" key="12">
    <source>
    </source>
</evidence>
<evidence type="ECO:0000303" key="13">
    <source>
    </source>
</evidence>
<evidence type="ECO:0000303" key="14">
    <source>
    </source>
</evidence>
<evidence type="ECO:0000305" key="15"/>
<evidence type="ECO:0000312" key="16">
    <source>
        <dbReference type="HGNC" id="HGNC:18184"/>
    </source>
</evidence>
<evidence type="ECO:0007744" key="17">
    <source>
        <dbReference type="PDB" id="5V83"/>
    </source>
</evidence>
<evidence type="ECO:0007744" key="18">
    <source>
        <dbReference type="PDB" id="5V86"/>
    </source>
</evidence>
<evidence type="ECO:0007744" key="19">
    <source>
        <dbReference type="PDB" id="5V88"/>
    </source>
</evidence>
<evidence type="ECO:0007744" key="20">
    <source>
    </source>
</evidence>
<evidence type="ECO:0007829" key="21">
    <source>
        <dbReference type="PDB" id="4P5O"/>
    </source>
</evidence>
<evidence type="ECO:0007829" key="22">
    <source>
        <dbReference type="PDB" id="6BG3"/>
    </source>
</evidence>
<evidence type="ECO:0007829" key="23">
    <source>
        <dbReference type="PDB" id="6P5V"/>
    </source>
</evidence>
<evidence type="ECO:0007829" key="24">
    <source>
        <dbReference type="PDB" id="6XOM"/>
    </source>
</evidence>
<evidence type="ECO:0007829" key="25">
    <source>
        <dbReference type="PDB" id="8OR3"/>
    </source>
</evidence>
<protein>
    <recommendedName>
        <fullName evidence="15">DCN1-like protein 1</fullName>
        <shortName evidence="13">DCNL1</shortName>
    </recommendedName>
    <alternativeName>
        <fullName>DCUN1 domain-containing protein 1</fullName>
    </alternativeName>
    <alternativeName>
        <fullName>Defective in cullin neddylation protein 1-like protein 1</fullName>
    </alternativeName>
    <alternativeName>
        <fullName>Squamous cell carcinoma-related oncogene</fullName>
    </alternativeName>
</protein>
<comment type="function">
    <text evidence="1 4 5 7 8 9 10 11">Part of an E3 ubiquitin ligase complex for neddylation (PubMed:18826954). Promotes neddylation of cullin components of E3 cullin-RING ubiquitin ligase complexes (PubMed:19617556, PubMed:23201271, PubMed:23401859, PubMed:26906416). Acts by binding to cullin-RBX1 complexes in the cytoplasm and promoting their nuclear translocation, enhancing recruitment of E2-NEDD8 (UBE2M-NEDD8) thioester to the complex, and optimizing the orientation of proteins in the complex to allow efficient transfer of NEDD8 from the E2 to the cullin substrates. Involved in the release of inhibitory effets of CAND1 on cullin-RING ligase E3 complex assembly and activity (PubMed:25349211, PubMed:28581483). Also acts as an oncogene facilitating malignant transformation and carcinogenic progression (By similarity).</text>
</comment>
<comment type="subunit">
    <text evidence="4 5 6 7 8 9 10 11 12">Part of an E3 complex for neddylation composed of cullins, RBX1, UBE2M and CAND1 (PubMed:18826954). Interacts (via the DCUN1 domain) with the unneddylated cullins: interacts with CUL1, CUL2, CUL3, CUL4A, CUL4B and CUL5; these interactions promote the cullin neddylation and the identity of the cullin dictates the affinity of the interaction (PubMed:18826954, PubMed:19617556, PubMed:23201271, PubMed:23401859, PubMed:26906416, PubMed:30587576). Binds neddylated CUL1. Interacts (via the C-terminus 50 AA) directly with RBX1 (PubMed:18826954, PubMed:26906416). Interacts (via DCUN1 domain) with the N-terminally acetylated form of UBE2M and UBE2F (PubMed:19617556, PubMed:23201271, PubMed:28581483). Interacts preferentially with UBE2M-NEDD8 thioester (via N-terminus 1-26 AA) than with free UBE2M (PubMed:18826954, PubMed:25349211). UBE2M N-terminal acetylation increases the affinity of this interaction by about 2 orders of magnitude (PubMed:21940857). Interacts with CAND1; this interaction is indirect and is bridged by cullins such as CUL1 and CUL3 (PubMed:18826954, PubMed:26906416). May also interact with regulators or subunits of cullin-RING ligases such as RNF7, ELOB and DDB1; these interactions are bridged by cullins (PubMed:26906416). Component of VCB complex that contains at least DCUN1D1, CUL2 and VHL; this complex triggers CUL2 neddylation and consequently cullin ring ligase (CRL) substrates polyubiquitylation (PubMed:23401859). Interacts with VHL; this interaction triggers engagement of HIF1A in the VCB complex and is independent of CUL2 (PubMed:23401859). Interacts with CUL2 independently of VHL (PubMed:23401859). Interacts with SOCS1 and SOCS2 (PubMed:23401859). Interacts with HIF1A; this interaction increases the interaction between VHL and DCUN1D1 (PubMed:23401859). Interacts (via UBA-like domain) with ARIH2; promotes DCUN1D1 ubiquitination (PubMed:30587576).</text>
</comment>
<comment type="interaction">
    <interactant intactId="EBI-740086">
        <id>Q96GG9</id>
    </interactant>
    <interactant intactId="EBI-1056583">
        <id>Q15018</id>
        <label>ABRAXAS2</label>
    </interactant>
    <organismsDiffer>false</organismsDiffer>
    <experiments>3</experiments>
</comment>
<comment type="interaction">
    <interactant intactId="EBI-740086">
        <id>Q96GG9</id>
    </interactant>
    <interactant intactId="EBI-2875665">
        <id>Q96B67</id>
        <label>ARRDC3</label>
    </interactant>
    <organismsDiffer>false</organismsDiffer>
    <experiments>10</experiments>
</comment>
<comment type="interaction">
    <interactant intactId="EBI-740086">
        <id>Q96GG9</id>
    </interactant>
    <interactant intactId="EBI-2876678">
        <id>Q9H305</id>
        <label>CDIP1</label>
    </interactant>
    <organismsDiffer>false</organismsDiffer>
    <experiments>3</experiments>
</comment>
<comment type="interaction">
    <interactant intactId="EBI-740086">
        <id>Q96GG9</id>
    </interactant>
    <interactant intactId="EBI-724310">
        <id>Q15038</id>
        <label>DAZAP2</label>
    </interactant>
    <organismsDiffer>false</organismsDiffer>
    <experiments>9</experiments>
</comment>
<comment type="interaction">
    <interactant intactId="EBI-740086">
        <id>Q96GG9</id>
    </interactant>
    <interactant intactId="EBI-11978259">
        <id>Q92567-2</id>
        <label>FAM168A</label>
    </interactant>
    <organismsDiffer>false</organismsDiffer>
    <experiments>5</experiments>
</comment>
<comment type="interaction">
    <interactant intactId="EBI-740086">
        <id>Q96GG9</id>
    </interactant>
    <interactant intactId="EBI-750953">
        <id>Q96IJ6</id>
        <label>GMPPA</label>
    </interactant>
    <organismsDiffer>false</organismsDiffer>
    <experiments>3</experiments>
</comment>
<comment type="interaction">
    <interactant intactId="EBI-740086">
        <id>Q96GG9</id>
    </interactant>
    <interactant intactId="EBI-741037">
        <id>Q9BRK4</id>
        <label>LZTS2</label>
    </interactant>
    <organismsDiffer>false</organismsDiffer>
    <experiments>6</experiments>
</comment>
<comment type="interaction">
    <interactant intactId="EBI-740086">
        <id>Q96GG9</id>
    </interactant>
    <interactant intactId="EBI-373552">
        <id>Q96CS7</id>
        <label>PLEKHB2</label>
    </interactant>
    <organismsDiffer>false</organismsDiffer>
    <experiments>5</experiments>
</comment>
<comment type="interaction">
    <interactant intactId="EBI-740086">
        <id>Q96GG9</id>
    </interactant>
    <interactant intactId="EBI-2866213">
        <id>Q92537</id>
        <label>SUSD6</label>
    </interactant>
    <organismsDiffer>false</organismsDiffer>
    <experiments>3</experiments>
</comment>
<comment type="interaction">
    <interactant intactId="EBI-740086">
        <id>Q96GG9</id>
    </interactant>
    <interactant intactId="EBI-11528917">
        <id>Q8WW34-2</id>
        <label>TMEM239</label>
    </interactant>
    <organismsDiffer>false</organismsDiffer>
    <experiments>3</experiments>
</comment>
<comment type="interaction">
    <interactant intactId="EBI-740086">
        <id>Q96GG9</id>
    </interactant>
    <interactant intactId="EBI-10175039">
        <id>Q13625-3</id>
        <label>TP53BP2</label>
    </interactant>
    <organismsDiffer>false</organismsDiffer>
    <experiments>3</experiments>
</comment>
<comment type="interaction">
    <interactant intactId="EBI-740086">
        <id>Q96GG9</id>
    </interactant>
    <interactant intactId="EBI-739510">
        <id>Q9HCM9</id>
        <label>TRIM39</label>
    </interactant>
    <organismsDiffer>false</organismsDiffer>
    <experiments>4</experiments>
</comment>
<comment type="interaction">
    <interactant intactId="EBI-740086">
        <id>Q96GG9</id>
    </interactant>
    <interactant intactId="EBI-11523450">
        <id>Q9HCM9-2</id>
        <label>TRIM39</label>
    </interactant>
    <organismsDiffer>false</organismsDiffer>
    <experiments>7</experiments>
</comment>
<comment type="interaction">
    <interactant intactId="EBI-740086">
        <id>Q96GG9</id>
    </interactant>
    <interactant intactId="EBI-2130429">
        <id>Q9BYV2</id>
        <label>TRIM54</label>
    </interactant>
    <organismsDiffer>false</organismsDiffer>
    <experiments>3</experiments>
</comment>
<comment type="interaction">
    <interactant intactId="EBI-740086">
        <id>Q96GG9</id>
    </interactant>
    <interactant intactId="EBI-2340370">
        <id>Q9BZR9</id>
        <label>TRIM8</label>
    </interactant>
    <organismsDiffer>false</organismsDiffer>
    <experiments>3</experiments>
</comment>
<comment type="interaction">
    <interactant intactId="EBI-740086">
        <id>Q96GG9</id>
    </interactant>
    <interactant intactId="EBI-1041660">
        <id>P61081</id>
        <label>UBE2M</label>
    </interactant>
    <organismsDiffer>false</organismsDiffer>
    <experiments>5</experiments>
</comment>
<comment type="interaction">
    <interactant intactId="EBI-740086">
        <id>Q96GG9</id>
    </interactant>
    <interactant intactId="EBI-4400866">
        <id>Q9H9H4</id>
        <label>VPS37B</label>
    </interactant>
    <organismsDiffer>false</organismsDiffer>
    <experiments>3</experiments>
</comment>
<comment type="subcellular location">
    <subcellularLocation>
        <location evidence="9 10">Nucleus</location>
    </subcellularLocation>
    <subcellularLocation>
        <location evidence="10">Cytoplasm</location>
    </subcellularLocation>
    <text evidence="12">The ubiquitinated form is localized in the cytoplasm.</text>
</comment>
<comment type="tissue specificity">
    <text evidence="3">Expressed in pancreas, kidney, placenta, brain and heart. Weakly or not expressed in liver, skeletal muscle and lung. Strongly overexpressed in thyroid tumors, bronchioloalveolar carcinomas, and malignant tissues of squamous cell carcinoma of the oral tongue. Not overexpressed in aggressive adrenocortical carcinomas.</text>
</comment>
<comment type="domain">
    <text evidence="5 7 11 12">The DCUN1 domain, also known as PONY domain, mediates the interaction with different cullins (PubMed:19617556, PubMed:23201271). The DCUN1 domain mediates the interaction with the N-terminally acetylated NEDD8-conjugating E2s enzyme leading to the NEDD8 transfer from N-terminally acetylated NEDD8-conjugating E2s enzyme to different cullin C-terminal domain-RBX complexes; the neddylation efficiency correlates with the DCUN1D1-cullin and DCUN1D1-E2 interaction affinities (PubMed:23201271, PubMed:28581483). The UBA-like domain mediates interaction with autoubiquitylated ARIH2 leading to ubiquitin ligation to DCUN1D1 (PubMed:30587576).</text>
</comment>
<comment type="PTM">
    <text evidence="12">Mono- and poly-ubiquitinated by ARIH2 and ARIH1. Monoubiquitination by ARIH2 is mediated by an interaction between autoubiquitinated ARIH2 and the UBA-like domain. The monoubiquitinated form preferentially interacts with non-neddylated cullins and modulates cullin RING ligase (CRL) complex composition and activity.</text>
</comment>
<comment type="sequence caution" evidence="15">
    <conflict type="erroneous initiation">
        <sequence resource="EMBL-CDS" id="BAB15235"/>
    </conflict>
    <text>Truncated N-terminus.</text>
</comment>
<name>DCNL1_HUMAN</name>
<reference key="1">
    <citation type="journal article" date="2000" name="Genomics">
        <title>Cloning and expression analysis of a novel gene, RP42, mapping to an autism susceptibility locus on 6q16.</title>
        <authorList>
            <person name="Mas C."/>
            <person name="Bourgeois F."/>
            <person name="Bulfone A."/>
            <person name="Levacher B."/>
            <person name="Mugnier C."/>
            <person name="Simonneau M."/>
        </authorList>
    </citation>
    <scope>NUCLEOTIDE SEQUENCE [MRNA]</scope>
    <scope>TISSUE SPECIFICITY</scope>
    <source>
        <tissue>Telencephalon</tissue>
    </source>
</reference>
<reference key="2">
    <citation type="journal article" date="2006" name="Cancer Res.">
        <title>Squamous cell carcinoma related oncogene/DCUN1D1 is highly conserved and activated by amplification in squamous cell carcinomas.</title>
        <authorList>
            <person name="Sarkaria I."/>
            <person name="O-charoenrat P."/>
            <person name="Talbot S.G."/>
            <person name="Reddy P.G."/>
            <person name="Ngai I."/>
            <person name="Maghami E."/>
            <person name="Patel K.N."/>
            <person name="Lee B."/>
            <person name="Yonekawa Y."/>
            <person name="Dudas M."/>
            <person name="Kaufman A."/>
            <person name="Ryan R."/>
            <person name="Ghossein R."/>
            <person name="Rao P.H."/>
            <person name="Stoffel A."/>
            <person name="Ramanathan Y."/>
            <person name="Singh B."/>
        </authorList>
    </citation>
    <scope>NUCLEOTIDE SEQUENCE [MRNA]</scope>
    <source>
        <tissue>Lung carcinoma</tissue>
        <tissue>Squamous cell carcinoma</tissue>
    </source>
</reference>
<reference key="3">
    <citation type="journal article" date="2004" name="Nat. Genet.">
        <title>Complete sequencing and characterization of 21,243 full-length human cDNAs.</title>
        <authorList>
            <person name="Ota T."/>
            <person name="Suzuki Y."/>
            <person name="Nishikawa T."/>
            <person name="Otsuki T."/>
            <person name="Sugiyama T."/>
            <person name="Irie R."/>
            <person name="Wakamatsu A."/>
            <person name="Hayashi K."/>
            <person name="Sato H."/>
            <person name="Nagai K."/>
            <person name="Kimura K."/>
            <person name="Makita H."/>
            <person name="Sekine M."/>
            <person name="Obayashi M."/>
            <person name="Nishi T."/>
            <person name="Shibahara T."/>
            <person name="Tanaka T."/>
            <person name="Ishii S."/>
            <person name="Yamamoto J."/>
            <person name="Saito K."/>
            <person name="Kawai Y."/>
            <person name="Isono Y."/>
            <person name="Nakamura Y."/>
            <person name="Nagahari K."/>
            <person name="Murakami K."/>
            <person name="Yasuda T."/>
            <person name="Iwayanagi T."/>
            <person name="Wagatsuma M."/>
            <person name="Shiratori A."/>
            <person name="Sudo H."/>
            <person name="Hosoiri T."/>
            <person name="Kaku Y."/>
            <person name="Kodaira H."/>
            <person name="Kondo H."/>
            <person name="Sugawara M."/>
            <person name="Takahashi M."/>
            <person name="Kanda K."/>
            <person name="Yokoi T."/>
            <person name="Furuya T."/>
            <person name="Kikkawa E."/>
            <person name="Omura Y."/>
            <person name="Abe K."/>
            <person name="Kamihara K."/>
            <person name="Katsuta N."/>
            <person name="Sato K."/>
            <person name="Tanikawa M."/>
            <person name="Yamazaki M."/>
            <person name="Ninomiya K."/>
            <person name="Ishibashi T."/>
            <person name="Yamashita H."/>
            <person name="Murakawa K."/>
            <person name="Fujimori K."/>
            <person name="Tanai H."/>
            <person name="Kimata M."/>
            <person name="Watanabe M."/>
            <person name="Hiraoka S."/>
            <person name="Chiba Y."/>
            <person name="Ishida S."/>
            <person name="Ono Y."/>
            <person name="Takiguchi S."/>
            <person name="Watanabe S."/>
            <person name="Yosida M."/>
            <person name="Hotuta T."/>
            <person name="Kusano J."/>
            <person name="Kanehori K."/>
            <person name="Takahashi-Fujii A."/>
            <person name="Hara H."/>
            <person name="Tanase T.-O."/>
            <person name="Nomura Y."/>
            <person name="Togiya S."/>
            <person name="Komai F."/>
            <person name="Hara R."/>
            <person name="Takeuchi K."/>
            <person name="Arita M."/>
            <person name="Imose N."/>
            <person name="Musashino K."/>
            <person name="Yuuki H."/>
            <person name="Oshima A."/>
            <person name="Sasaki N."/>
            <person name="Aotsuka S."/>
            <person name="Yoshikawa Y."/>
            <person name="Matsunawa H."/>
            <person name="Ichihara T."/>
            <person name="Shiohata N."/>
            <person name="Sano S."/>
            <person name="Moriya S."/>
            <person name="Momiyama H."/>
            <person name="Satoh N."/>
            <person name="Takami S."/>
            <person name="Terashima Y."/>
            <person name="Suzuki O."/>
            <person name="Nakagawa S."/>
            <person name="Senoh A."/>
            <person name="Mizoguchi H."/>
            <person name="Goto Y."/>
            <person name="Shimizu F."/>
            <person name="Wakebe H."/>
            <person name="Hishigaki H."/>
            <person name="Watanabe T."/>
            <person name="Sugiyama A."/>
            <person name="Takemoto M."/>
            <person name="Kawakami B."/>
            <person name="Yamazaki M."/>
            <person name="Watanabe K."/>
            <person name="Kumagai A."/>
            <person name="Itakura S."/>
            <person name="Fukuzumi Y."/>
            <person name="Fujimori Y."/>
            <person name="Komiyama M."/>
            <person name="Tashiro H."/>
            <person name="Tanigami A."/>
            <person name="Fujiwara T."/>
            <person name="Ono T."/>
            <person name="Yamada K."/>
            <person name="Fujii Y."/>
            <person name="Ozaki K."/>
            <person name="Hirao M."/>
            <person name="Ohmori Y."/>
            <person name="Kawabata A."/>
            <person name="Hikiji T."/>
            <person name="Kobatake N."/>
            <person name="Inagaki H."/>
            <person name="Ikema Y."/>
            <person name="Okamoto S."/>
            <person name="Okitani R."/>
            <person name="Kawakami T."/>
            <person name="Noguchi S."/>
            <person name="Itoh T."/>
            <person name="Shigeta K."/>
            <person name="Senba T."/>
            <person name="Matsumura K."/>
            <person name="Nakajima Y."/>
            <person name="Mizuno T."/>
            <person name="Morinaga M."/>
            <person name="Sasaki M."/>
            <person name="Togashi T."/>
            <person name="Oyama M."/>
            <person name="Hata H."/>
            <person name="Watanabe M."/>
            <person name="Komatsu T."/>
            <person name="Mizushima-Sugano J."/>
            <person name="Satoh T."/>
            <person name="Shirai Y."/>
            <person name="Takahashi Y."/>
            <person name="Nakagawa K."/>
            <person name="Okumura K."/>
            <person name="Nagase T."/>
            <person name="Nomura N."/>
            <person name="Kikuchi H."/>
            <person name="Masuho Y."/>
            <person name="Yamashita R."/>
            <person name="Nakai K."/>
            <person name="Yada T."/>
            <person name="Nakamura Y."/>
            <person name="Ohara O."/>
            <person name="Isogai T."/>
            <person name="Sugano S."/>
        </authorList>
    </citation>
    <scope>NUCLEOTIDE SEQUENCE [LARGE SCALE MRNA]</scope>
    <source>
        <tissue>Trachea</tissue>
    </source>
</reference>
<reference key="4">
    <citation type="submission" date="2005-09" db="EMBL/GenBank/DDBJ databases">
        <authorList>
            <person name="Mural R.J."/>
            <person name="Istrail S."/>
            <person name="Sutton G.G."/>
            <person name="Florea L."/>
            <person name="Halpern A.L."/>
            <person name="Mobarry C.M."/>
            <person name="Lippert R."/>
            <person name="Walenz B."/>
            <person name="Shatkay H."/>
            <person name="Dew I."/>
            <person name="Miller J.R."/>
            <person name="Flanigan M.J."/>
            <person name="Edwards N.J."/>
            <person name="Bolanos R."/>
            <person name="Fasulo D."/>
            <person name="Halldorsson B.V."/>
            <person name="Hannenhalli S."/>
            <person name="Turner R."/>
            <person name="Yooseph S."/>
            <person name="Lu F."/>
            <person name="Nusskern D.R."/>
            <person name="Shue B.C."/>
            <person name="Zheng X.H."/>
            <person name="Zhong F."/>
            <person name="Delcher A.L."/>
            <person name="Huson D.H."/>
            <person name="Kravitz S.A."/>
            <person name="Mouchard L."/>
            <person name="Reinert K."/>
            <person name="Remington K.A."/>
            <person name="Clark A.G."/>
            <person name="Waterman M.S."/>
            <person name="Eichler E.E."/>
            <person name="Adams M.D."/>
            <person name="Hunkapiller M.W."/>
            <person name="Myers E.W."/>
            <person name="Venter J.C."/>
        </authorList>
    </citation>
    <scope>NUCLEOTIDE SEQUENCE [LARGE SCALE GENOMIC DNA]</scope>
</reference>
<reference key="5">
    <citation type="journal article" date="2004" name="Genome Res.">
        <title>The status, quality, and expansion of the NIH full-length cDNA project: the Mammalian Gene Collection (MGC).</title>
        <authorList>
            <consortium name="The MGC Project Team"/>
        </authorList>
    </citation>
    <scope>NUCLEOTIDE SEQUENCE [LARGE SCALE MRNA]</scope>
    <source>
        <tissue>Lung</tissue>
        <tissue>Skin</tissue>
    </source>
</reference>
<reference key="6">
    <citation type="journal article" date="2003" name="Clin. Cancer Res.">
        <title>The role of novel oncogenes squamous cell carcinoma-related oncogene and phosphatidylinositol 3-kinase p110alpha in squamous cell carcinoma of the oral tongue.</title>
        <authorList>
            <person name="Estilo C.L."/>
            <person name="O-Charoenrat P."/>
            <person name="Ngai I."/>
            <person name="Patel S.G."/>
            <person name="Reddy P.G."/>
            <person name="Dao S."/>
            <person name="Shaha A.R."/>
            <person name="Kraus D.H."/>
            <person name="Boyle J.O."/>
            <person name="Wong R.J."/>
            <person name="Pfister D.G."/>
            <person name="Huryn J.M."/>
            <person name="Zlotolow I.M."/>
            <person name="Shah J.P."/>
            <person name="Singh B."/>
        </authorList>
    </citation>
    <scope>OVEREXPRESSION IN SQUAMOUS CELL CARCINOMAS</scope>
</reference>
<reference key="7">
    <citation type="journal article" date="2004" name="Ann. Surg. Oncol.">
        <title>Squamous cell carcinoma related oncogene regulates angiogenesis through vascular endothelial growth factor-A.</title>
        <authorList>
            <person name="Talbot S.G."/>
            <person name="O-charoenrat P."/>
            <person name="Sarkaria I.S."/>
            <person name="Ghossein R."/>
            <person name="Reddy P."/>
            <person name="Ngai I."/>
            <person name="Cordeiro C.N."/>
            <person name="Wong R.J."/>
            <person name="Kris M.G."/>
            <person name="Rusch V.W."/>
            <person name="Singh B."/>
        </authorList>
    </citation>
    <scope>OVEREXPRESSION IN SQUAMOUS CELL CARCINOMAS</scope>
</reference>
<reference key="8">
    <citation type="journal article" date="2004" name="Ann. Thorac. Surg.">
        <title>SCCRO expression correlates with invasive progression in bronchioloalveolar carcinoma.</title>
        <authorList>
            <person name="Sarkaria I.S."/>
            <person name="Pham D."/>
            <person name="Ghossein R.A."/>
            <person name="Talbot S.G."/>
            <person name="Hezel M."/>
            <person name="Dudas M.E."/>
            <person name="Ebright M.I."/>
            <person name="Chuai S."/>
            <person name="Memoli N."/>
            <person name="Venkatraman E.S."/>
            <person name="Miller V.A."/>
            <person name="Kris M.G."/>
            <person name="Zakowski M.F."/>
            <person name="Rusch V.W."/>
            <person name="Singh B."/>
        </authorList>
    </citation>
    <scope>OVEREXPRESSION IN BRONCHIOLOALVEOLAR CARCINOMAS</scope>
</reference>
<reference key="9">
    <citation type="journal article" date="2004" name="Surgery">
        <title>Squamous cell carcinoma-related oncogene is highly expressed in developing, normal, and adenomatous adrenal tissue but not in aggressive adrenocortical carcinomas.</title>
        <authorList>
            <person name="Sarkaria I.S."/>
            <person name="Stojadinovic A."/>
            <person name="Talbot S.G."/>
            <person name="Hoos A."/>
            <person name="Dudas M.E."/>
            <person name="Brennan M.F."/>
            <person name="Ghossein R.A."/>
            <person name="Singh B."/>
        </authorList>
    </citation>
    <scope>LACK OF OVEREXPRESSION IN ADRENOCORTICAL CARCINOMAS</scope>
</reference>
<reference key="10">
    <citation type="journal article" date="2005" name="J. Clin. Endocrinol. Metab.">
        <title>Two-step differential expression analysis reveals a new set of genes involved in thyroid oncocytic tumors.</title>
        <authorList>
            <person name="Jacques C."/>
            <person name="Baris O."/>
            <person name="Prunier-Mirebeau D."/>
            <person name="Savagner F."/>
            <person name="Rodien P."/>
            <person name="Rohmer V."/>
            <person name="Franc B."/>
            <person name="Guyetant S."/>
            <person name="Malthiery Y."/>
            <person name="Reynier P."/>
        </authorList>
    </citation>
    <scope>OVEREXPRESSION IN THYROID CANCERS</scope>
</reference>
<reference key="11">
    <citation type="journal article" date="2008" name="J. Biol. Chem.">
        <title>SCCRO (DCUN1D1) is an essential component of the E3 complex for neddylation.</title>
        <authorList>
            <person name="Kim A.Y."/>
            <person name="Bommelje C.C."/>
            <person name="Lee B.E."/>
            <person name="Yonekawa Y."/>
            <person name="Choi L."/>
            <person name="Morris L.G."/>
            <person name="Huang G."/>
            <person name="Kaufman A."/>
            <person name="Ryan R.J."/>
            <person name="Hao B."/>
            <person name="Ramanathan Y."/>
            <person name="Singh B."/>
        </authorList>
    </citation>
    <scope>IDENTIFICATION IN AN E3 LIGASE COMPLEX FOR NEDDYLATION</scope>
    <scope>INTERACTION WITH CUL1; CUL2; CUL3; CUL4; CUL5; UBE2M; CAND1 AND RBX1</scope>
    <scope>MUTAGENESIS OF ASP-241</scope>
</reference>
<reference key="12">
    <citation type="journal article" date="2009" name="Proc. Natl. Acad. Sci. U.S.A.">
        <title>The human Dcn1-like protein DCNL3 promotes Cul3 neddylation at membranes.</title>
        <authorList>
            <person name="Meyer-Schaller N."/>
            <person name="Chou Y.C."/>
            <person name="Sumara I."/>
            <person name="Martin D.D."/>
            <person name="Kurz T."/>
            <person name="Katheder N."/>
            <person name="Hofmann K."/>
            <person name="Berthiaume L.G."/>
            <person name="Sicheri F."/>
            <person name="Peter M."/>
        </authorList>
    </citation>
    <scope>INTERACTION WITH CUL1; CUL2; CUL3; CUL4A; CUL4B; CUL5 AND UBE2M</scope>
    <scope>MUTAGENESIS OF ASP-211; ALA-235 AND ASP-241</scope>
    <scope>DOMAIN</scope>
    <scope>FUNCTION</scope>
</reference>
<reference key="13">
    <citation type="journal article" date="2011" name="BMC Syst. Biol.">
        <title>Initial characterization of the human central proteome.</title>
        <authorList>
            <person name="Burkard T.R."/>
            <person name="Planyavsky M."/>
            <person name="Kaupe I."/>
            <person name="Breitwieser F.P."/>
            <person name="Buerckstuemmer T."/>
            <person name="Bennett K.L."/>
            <person name="Superti-Furga G."/>
            <person name="Colinge J."/>
        </authorList>
    </citation>
    <scope>IDENTIFICATION BY MASS SPECTROMETRY [LARGE SCALE ANALYSIS]</scope>
</reference>
<reference key="14">
    <citation type="journal article" date="2012" name="Proc. Natl. Acad. Sci. U.S.A.">
        <title>N-terminal acetylome analyses and functional insights of the N-terminal acetyltransferase NatB.</title>
        <authorList>
            <person name="Van Damme P."/>
            <person name="Lasa M."/>
            <person name="Polevoda B."/>
            <person name="Gazquez C."/>
            <person name="Elosegui-Artola A."/>
            <person name="Kim D.S."/>
            <person name="De Juan-Pardo E."/>
            <person name="Demeyer K."/>
            <person name="Hole K."/>
            <person name="Larrea E."/>
            <person name="Timmerman E."/>
            <person name="Prieto J."/>
            <person name="Arnesen T."/>
            <person name="Sherman F."/>
            <person name="Gevaert K."/>
            <person name="Aldabe R."/>
        </authorList>
    </citation>
    <scope>ACETYLATION [LARGE SCALE ANALYSIS] AT MET-1</scope>
    <scope>IDENTIFICATION BY MASS SPECTROMETRY [LARGE SCALE ANALYSIS]</scope>
</reference>
<reference key="15">
    <citation type="journal article" date="2013" name="Mol. Cell. Biol.">
        <title>DCNL1 functions as a substrate sensor and activator of cullin 2-RING ligase.</title>
        <authorList>
            <person name="Heir P."/>
            <person name="Sufan R.I."/>
            <person name="Greer S.N."/>
            <person name="Poon B.P."/>
            <person name="Lee J.E."/>
            <person name="Ohh M."/>
        </authorList>
    </citation>
    <scope>FUNCTION</scope>
    <scope>MUTAGENESIS OF ASP-211; ALA-235 AND ASP-241</scope>
    <scope>INTERACTION WITH CUL2; VHL; SOCS2; SOCS1 AND HIF1A</scope>
    <scope>COMPONENT OF VCB COMPLEX</scope>
</reference>
<reference key="16">
    <citation type="journal article" date="2013" name="Structure">
        <title>Structural conservation of distinctive N-terminal acetylation-dependent interactions across a family of mammalian NEDD8 ligation enzymes.</title>
        <authorList>
            <person name="Monda J.K."/>
            <person name="Scott D.C."/>
            <person name="Miller D.J."/>
            <person name="Lydeard J."/>
            <person name="King D."/>
            <person name="Harper J.W."/>
            <person name="Bennett E.J."/>
            <person name="Schulman B.A."/>
        </authorList>
    </citation>
    <scope>DOMAIN</scope>
    <scope>INTERACTION WITH CUL1; CUL2; CUL3; CUL4A; CUL4B; CUL5; UBE2M AND UBE2F</scope>
    <scope>FUNCTION</scope>
</reference>
<reference key="17">
    <citation type="journal article" date="2014" name="J. Biol. Chem.">
        <title>SCCRO3 (DCUN1D3) antagonizes the neddylation and oncogenic activity of SCCRO (DCUN1D1).</title>
        <authorList>
            <person name="Huang G."/>
            <person name="Stock C."/>
            <person name="Bommelje C.C."/>
            <person name="Weeda V.B."/>
            <person name="Shah K."/>
            <person name="Bains S."/>
            <person name="Buss E."/>
            <person name="Shaha M."/>
            <person name="Rechler W."/>
            <person name="Ramanathan S.Y."/>
            <person name="Singh B."/>
        </authorList>
    </citation>
    <scope>FUNCTION</scope>
    <scope>SUBCELLULAR LOCATION</scope>
    <scope>INTERACTION WITH UBE2M</scope>
</reference>
<reference key="18">
    <citation type="journal article" date="2016" name="J. Cell Sci.">
        <title>Characterization of the mammalian family of DCN-type NEDD8 E3 ligases.</title>
        <authorList>
            <person name="Keuss M.J."/>
            <person name="Thomas Y."/>
            <person name="Mcarthur R."/>
            <person name="Wood N.T."/>
            <person name="Knebel A."/>
            <person name="Kurz T."/>
        </authorList>
    </citation>
    <scope>INTERACTION WITH CUL1; CUL2; CUL3; CUL4A; CUL4B; CUL5; CAND1; RBX1; RNF7; ELOB AND DDB1</scope>
    <scope>SUBCELLULAR LOCATION</scope>
    <scope>MUTAGENESIS OF ASP-211; ALA-235 AND ASP-241</scope>
    <scope>FUNCTION</scope>
</reference>
<reference key="19">
    <citation type="journal article" date="2019" name="J. Biol. Chem.">
        <title>Coupled monoubiquitylation of the co-E3 ligase DCNL1 by Ariadne-RBR E3 ubiquitin ligases promotes cullin-RING ligase complex remodeling.</title>
        <authorList>
            <person name="Kelsall I.R."/>
            <person name="Kristariyanto Y.A."/>
            <person name="Knebel A."/>
            <person name="Wood N.T."/>
            <person name="Kulathu Y."/>
            <person name="Alpi A.F."/>
        </authorList>
    </citation>
    <scope>SUBCELLULAR LOCATION</scope>
    <scope>UBIQUITINATION</scope>
    <scope>DOMAIN</scope>
    <scope>MUTAGENESIS OF PHE-15; MET-16; PHE-44; PHE-45; ASP-211; ALA-235 AND ASP-241</scope>
    <scope>INTERACTION WITH CUL1; CUL2; CUL3; CUL4A; CUL4B; CUL5 AND ARIH2</scope>
</reference>
<reference key="20">
    <citation type="journal article" date="2011" name="Science">
        <title>N-terminal acetylation acts as an avidity enhancer within an interconnected multiprotein complex.</title>
        <authorList>
            <person name="Scott D.C."/>
            <person name="Monda J.K."/>
            <person name="Bennett E.J."/>
            <person name="Harper J.W."/>
            <person name="Schulman B.A."/>
        </authorList>
    </citation>
    <scope>X-RAY CRYSTALLOGRAPHY (1.5 ANGSTROMS) OF 62-259 IN COMPLEX WITH CUL1 AND UBE2M</scope>
</reference>
<reference evidence="17 18 19" key="21">
    <citation type="journal article" date="2017" name="Nat. Chem. Biol.">
        <title>Blocking an N-terminal acetylation-dependent protein interaction inhibits an E3 ligase.</title>
        <authorList>
            <person name="Scott D.C."/>
            <person name="Hammill J.T."/>
            <person name="Min J."/>
            <person name="Rhee D.Y."/>
            <person name="Connelly M."/>
            <person name="Sviderskiy V.O."/>
            <person name="Bhasin D."/>
            <person name="Chen Y."/>
            <person name="Ong S.S."/>
            <person name="Chai S.C."/>
            <person name="Goktug A.N."/>
            <person name="Huang G."/>
            <person name="Monda J.K."/>
            <person name="Low J."/>
            <person name="Kim H.S."/>
            <person name="Paulo J.A."/>
            <person name="Cannon J.R."/>
            <person name="Shelat A.A."/>
            <person name="Chen T."/>
            <person name="Kelsall I.R."/>
            <person name="Alpi A.F."/>
            <person name="Pagala V."/>
            <person name="Wang X."/>
            <person name="Peng J."/>
            <person name="Singh B."/>
            <person name="Harper J.W."/>
            <person name="Schulman B.A."/>
            <person name="Guy R.K."/>
        </authorList>
    </citation>
    <scope>X-RAY CRYSTALLOGRAPHY (1.37 ANGSTROMS) OF 62-259 IN COMPLEX WITH INHIBITORS</scope>
    <scope>FUNCTION</scope>
    <scope>INTERACTION WITH UBE2M</scope>
    <scope>MUTAGENESIS OF CYS-115</scope>
    <scope>SITE</scope>
    <scope>DOMAIN</scope>
</reference>
<accession>Q96GG9</accession>
<accession>B2RB37</accession>
<accession>Q7L3G9</accession>
<accession>Q8TEX7</accession>
<accession>Q9H6M1</accession>
<accession>Q9HCT3</accession>
<organism>
    <name type="scientific">Homo sapiens</name>
    <name type="common">Human</name>
    <dbReference type="NCBI Taxonomy" id="9606"/>
    <lineage>
        <taxon>Eukaryota</taxon>
        <taxon>Metazoa</taxon>
        <taxon>Chordata</taxon>
        <taxon>Craniata</taxon>
        <taxon>Vertebrata</taxon>
        <taxon>Euteleostomi</taxon>
        <taxon>Mammalia</taxon>
        <taxon>Eutheria</taxon>
        <taxon>Euarchontoglires</taxon>
        <taxon>Primates</taxon>
        <taxon>Haplorrhini</taxon>
        <taxon>Catarrhini</taxon>
        <taxon>Hominidae</taxon>
        <taxon>Homo</taxon>
    </lineage>
</organism>
<proteinExistence type="evidence at protein level"/>
<gene>
    <name evidence="16" type="primary">DCUN1D1</name>
    <name evidence="14" type="synonym">DCN1</name>
    <name type="synonym">DCUN1L1</name>
    <name type="synonym">RP42</name>
    <name type="synonym">SCCRO</name>
</gene>
<dbReference type="EMBL" id="AF292100">
    <property type="protein sequence ID" value="AAG00606.2"/>
    <property type="molecule type" value="mRNA"/>
</dbReference>
<dbReference type="EMBL" id="AF456425">
    <property type="protein sequence ID" value="AAL78672.1"/>
    <property type="molecule type" value="mRNA"/>
</dbReference>
<dbReference type="EMBL" id="AF456426">
    <property type="protein sequence ID" value="AAL78673.1"/>
    <property type="molecule type" value="mRNA"/>
</dbReference>
<dbReference type="EMBL" id="AK025764">
    <property type="protein sequence ID" value="BAB15235.1"/>
    <property type="status" value="ALT_INIT"/>
    <property type="molecule type" value="mRNA"/>
</dbReference>
<dbReference type="EMBL" id="AK056335">
    <property type="protein sequence ID" value="BAG51680.1"/>
    <property type="molecule type" value="mRNA"/>
</dbReference>
<dbReference type="EMBL" id="AK314480">
    <property type="protein sequence ID" value="BAG37084.1"/>
    <property type="molecule type" value="mRNA"/>
</dbReference>
<dbReference type="EMBL" id="CH471052">
    <property type="protein sequence ID" value="EAW78342.1"/>
    <property type="molecule type" value="Genomic_DNA"/>
</dbReference>
<dbReference type="EMBL" id="BC009478">
    <property type="protein sequence ID" value="AAH09478.1"/>
    <property type="molecule type" value="mRNA"/>
</dbReference>
<dbReference type="EMBL" id="BC013163">
    <property type="protein sequence ID" value="AAH13163.2"/>
    <property type="molecule type" value="mRNA"/>
</dbReference>
<dbReference type="CCDS" id="CCDS3240.1"/>
<dbReference type="RefSeq" id="NP_001295030.1">
    <property type="nucleotide sequence ID" value="NM_001308101.1"/>
</dbReference>
<dbReference type="RefSeq" id="NP_065691.2">
    <property type="nucleotide sequence ID" value="NM_020640.3"/>
</dbReference>
<dbReference type="PDB" id="3TDU">
    <property type="method" value="X-ray"/>
    <property type="resolution" value="1.50 A"/>
    <property type="chains" value="A/B=62-259"/>
</dbReference>
<dbReference type="PDB" id="3TDZ">
    <property type="method" value="X-ray"/>
    <property type="resolution" value="2.00 A"/>
    <property type="chains" value="A/B=62-259"/>
</dbReference>
<dbReference type="PDB" id="4P5O">
    <property type="method" value="X-ray"/>
    <property type="resolution" value="3.11 A"/>
    <property type="chains" value="E/F=62-259"/>
</dbReference>
<dbReference type="PDB" id="5UFI">
    <property type="method" value="X-ray"/>
    <property type="resolution" value="2.58 A"/>
    <property type="chains" value="A/B/C/D=58-259"/>
</dbReference>
<dbReference type="PDB" id="5V83">
    <property type="method" value="X-ray"/>
    <property type="resolution" value="2.00 A"/>
    <property type="chains" value="A=62-259"/>
</dbReference>
<dbReference type="PDB" id="5V86">
    <property type="method" value="X-ray"/>
    <property type="resolution" value="1.37 A"/>
    <property type="chains" value="A=62-259"/>
</dbReference>
<dbReference type="PDB" id="5V88">
    <property type="method" value="X-ray"/>
    <property type="resolution" value="1.60 A"/>
    <property type="chains" value="A=62-259"/>
</dbReference>
<dbReference type="PDB" id="6B5Q">
    <property type="method" value="X-ray"/>
    <property type="resolution" value="2.16 A"/>
    <property type="chains" value="A/B=58-259"/>
</dbReference>
<dbReference type="PDB" id="6BG3">
    <property type="method" value="X-ray"/>
    <property type="resolution" value="1.05 A"/>
    <property type="chains" value="A=62-259"/>
</dbReference>
<dbReference type="PDB" id="6BG5">
    <property type="method" value="X-ray"/>
    <property type="resolution" value="1.10 A"/>
    <property type="chains" value="A=62-259"/>
</dbReference>
<dbReference type="PDB" id="6P5V">
    <property type="method" value="X-ray"/>
    <property type="resolution" value="1.40 A"/>
    <property type="chains" value="A=62-259"/>
</dbReference>
<dbReference type="PDB" id="6P5W">
    <property type="method" value="X-ray"/>
    <property type="resolution" value="1.69 A"/>
    <property type="chains" value="A=62-259"/>
</dbReference>
<dbReference type="PDB" id="6XOL">
    <property type="method" value="X-ray"/>
    <property type="resolution" value="2.39 A"/>
    <property type="chains" value="A=62-259"/>
</dbReference>
<dbReference type="PDB" id="6XOM">
    <property type="method" value="X-ray"/>
    <property type="resolution" value="2.10 A"/>
    <property type="chains" value="A=62-259"/>
</dbReference>
<dbReference type="PDB" id="6XON">
    <property type="method" value="X-ray"/>
    <property type="resolution" value="2.80 A"/>
    <property type="chains" value="A=62-259"/>
</dbReference>
<dbReference type="PDB" id="6XOO">
    <property type="method" value="X-ray"/>
    <property type="resolution" value="2.06 A"/>
    <property type="chains" value="A=62-259"/>
</dbReference>
<dbReference type="PDB" id="6XOP">
    <property type="method" value="X-ray"/>
    <property type="resolution" value="2.07 A"/>
    <property type="chains" value="A=62-259"/>
</dbReference>
<dbReference type="PDB" id="6XOQ">
    <property type="method" value="X-ray"/>
    <property type="resolution" value="2.07 A"/>
    <property type="chains" value="A=62-259"/>
</dbReference>
<dbReference type="PDB" id="7KWA">
    <property type="method" value="X-ray"/>
    <property type="resolution" value="1.57 A"/>
    <property type="chains" value="A=62-259"/>
</dbReference>
<dbReference type="PDB" id="8OR2">
    <property type="method" value="EM"/>
    <property type="resolution" value="3.20 A"/>
    <property type="chains" value="F=1-259"/>
</dbReference>
<dbReference type="PDB" id="8OR3">
    <property type="method" value="EM"/>
    <property type="resolution" value="2.90 A"/>
    <property type="chains" value="F=1-259"/>
</dbReference>
<dbReference type="PDBsum" id="3TDU"/>
<dbReference type="PDBsum" id="3TDZ"/>
<dbReference type="PDBsum" id="4P5O"/>
<dbReference type="PDBsum" id="5UFI"/>
<dbReference type="PDBsum" id="5V83"/>
<dbReference type="PDBsum" id="5V86"/>
<dbReference type="PDBsum" id="5V88"/>
<dbReference type="PDBsum" id="6B5Q"/>
<dbReference type="PDBsum" id="6BG3"/>
<dbReference type="PDBsum" id="6BG5"/>
<dbReference type="PDBsum" id="6P5V"/>
<dbReference type="PDBsum" id="6P5W"/>
<dbReference type="PDBsum" id="6XOL"/>
<dbReference type="PDBsum" id="6XOM"/>
<dbReference type="PDBsum" id="6XON"/>
<dbReference type="PDBsum" id="6XOO"/>
<dbReference type="PDBsum" id="6XOP"/>
<dbReference type="PDBsum" id="6XOQ"/>
<dbReference type="PDBsum" id="7KWA"/>
<dbReference type="PDBsum" id="8OR2"/>
<dbReference type="PDBsum" id="8OR3"/>
<dbReference type="EMDB" id="EMD-17115"/>
<dbReference type="EMDB" id="EMD-17116"/>
<dbReference type="SMR" id="Q96GG9"/>
<dbReference type="BioGRID" id="119920">
    <property type="interactions" value="277"/>
</dbReference>
<dbReference type="DIP" id="DIP-42121N"/>
<dbReference type="ELM" id="Q96GG9"/>
<dbReference type="FunCoup" id="Q96GG9">
    <property type="interactions" value="2584"/>
</dbReference>
<dbReference type="IntAct" id="Q96GG9">
    <property type="interactions" value="222"/>
</dbReference>
<dbReference type="MINT" id="Q96GG9"/>
<dbReference type="STRING" id="9606.ENSP00000292782"/>
<dbReference type="BindingDB" id="Q96GG9"/>
<dbReference type="ChEMBL" id="CHEMBL4105838"/>
<dbReference type="GlyGen" id="Q96GG9">
    <property type="glycosylation" value="1 site, 1 O-linked glycan (1 site)"/>
</dbReference>
<dbReference type="iPTMnet" id="Q96GG9"/>
<dbReference type="MetOSite" id="Q96GG9"/>
<dbReference type="PhosphoSitePlus" id="Q96GG9"/>
<dbReference type="BioMuta" id="DCUN1D1"/>
<dbReference type="DMDM" id="73919222"/>
<dbReference type="jPOST" id="Q96GG9"/>
<dbReference type="MassIVE" id="Q96GG9"/>
<dbReference type="PaxDb" id="9606-ENSP00000292782"/>
<dbReference type="PeptideAtlas" id="Q96GG9"/>
<dbReference type="ProteomicsDB" id="76634"/>
<dbReference type="Pumba" id="Q96GG9"/>
<dbReference type="Antibodypedia" id="18885">
    <property type="antibodies" value="264 antibodies from 31 providers"/>
</dbReference>
<dbReference type="DNASU" id="54165"/>
<dbReference type="Ensembl" id="ENST00000292782.9">
    <property type="protein sequence ID" value="ENSP00000292782.4"/>
    <property type="gene ID" value="ENSG00000043093.15"/>
</dbReference>
<dbReference type="GeneID" id="54165"/>
<dbReference type="KEGG" id="hsa:54165"/>
<dbReference type="MANE-Select" id="ENST00000292782.9">
    <property type="protein sequence ID" value="ENSP00000292782.4"/>
    <property type="RefSeq nucleotide sequence ID" value="NM_020640.4"/>
    <property type="RefSeq protein sequence ID" value="NP_065691.2"/>
</dbReference>
<dbReference type="UCSC" id="uc003fld.2">
    <property type="organism name" value="human"/>
</dbReference>
<dbReference type="AGR" id="HGNC:18184"/>
<dbReference type="CTD" id="54165"/>
<dbReference type="DisGeNET" id="54165"/>
<dbReference type="GeneCards" id="DCUN1D1"/>
<dbReference type="HGNC" id="HGNC:18184">
    <property type="gene designation" value="DCUN1D1"/>
</dbReference>
<dbReference type="HPA" id="ENSG00000043093">
    <property type="expression patterns" value="Tissue enriched (testis)"/>
</dbReference>
<dbReference type="MalaCards" id="DCUN1D1"/>
<dbReference type="MIM" id="605905">
    <property type="type" value="gene"/>
</dbReference>
<dbReference type="neXtProt" id="NX_Q96GG9"/>
<dbReference type="OpenTargets" id="ENSG00000043093"/>
<dbReference type="PharmGKB" id="PA142672008"/>
<dbReference type="VEuPathDB" id="HostDB:ENSG00000043093"/>
<dbReference type="eggNOG" id="KOG3077">
    <property type="taxonomic scope" value="Eukaryota"/>
</dbReference>
<dbReference type="GeneTree" id="ENSGT00940000154552"/>
<dbReference type="HOGENOM" id="CLU_047042_0_1_1"/>
<dbReference type="InParanoid" id="Q96GG9"/>
<dbReference type="OMA" id="PHEPDKM"/>
<dbReference type="OrthoDB" id="286637at2759"/>
<dbReference type="PAN-GO" id="Q96GG9">
    <property type="GO annotations" value="6 GO annotations based on evolutionary models"/>
</dbReference>
<dbReference type="PhylomeDB" id="Q96GG9"/>
<dbReference type="TreeFam" id="TF313332"/>
<dbReference type="BioCyc" id="MetaCyc:ENSG00000043093-MONOMER"/>
<dbReference type="PathwayCommons" id="Q96GG9"/>
<dbReference type="Reactome" id="R-HSA-8951664">
    <property type="pathway name" value="Neddylation"/>
</dbReference>
<dbReference type="SignaLink" id="Q96GG9"/>
<dbReference type="SIGNOR" id="Q96GG9"/>
<dbReference type="BioGRID-ORCS" id="54165">
    <property type="hits" value="45 hits in 1128 CRISPR screens"/>
</dbReference>
<dbReference type="ChiTaRS" id="DCUN1D1">
    <property type="organism name" value="human"/>
</dbReference>
<dbReference type="EvolutionaryTrace" id="Q96GG9"/>
<dbReference type="GeneWiki" id="DCUN1D1"/>
<dbReference type="GenomeRNAi" id="54165"/>
<dbReference type="Pharos" id="Q96GG9">
    <property type="development level" value="Tchem"/>
</dbReference>
<dbReference type="PRO" id="PR:Q96GG9"/>
<dbReference type="Proteomes" id="UP000005640">
    <property type="component" value="Chromosome 3"/>
</dbReference>
<dbReference type="RNAct" id="Q96GG9">
    <property type="molecule type" value="protein"/>
</dbReference>
<dbReference type="Bgee" id="ENSG00000043093">
    <property type="expression patterns" value="Expressed in left testis and 199 other cell types or tissues"/>
</dbReference>
<dbReference type="ExpressionAtlas" id="Q96GG9">
    <property type="expression patterns" value="baseline and differential"/>
</dbReference>
<dbReference type="GO" id="GO:0005737">
    <property type="term" value="C:cytoplasm"/>
    <property type="evidence" value="ECO:0000315"/>
    <property type="project" value="UniProtKB"/>
</dbReference>
<dbReference type="GO" id="GO:0005829">
    <property type="term" value="C:cytosol"/>
    <property type="evidence" value="ECO:0000314"/>
    <property type="project" value="HPA"/>
</dbReference>
<dbReference type="GO" id="GO:0005654">
    <property type="term" value="C:nucleoplasm"/>
    <property type="evidence" value="ECO:0000314"/>
    <property type="project" value="HPA"/>
</dbReference>
<dbReference type="GO" id="GO:0005634">
    <property type="term" value="C:nucleus"/>
    <property type="evidence" value="ECO:0000315"/>
    <property type="project" value="UniProtKB"/>
</dbReference>
<dbReference type="GO" id="GO:0000151">
    <property type="term" value="C:ubiquitin ligase complex"/>
    <property type="evidence" value="ECO:0000314"/>
    <property type="project" value="UniProtKB"/>
</dbReference>
<dbReference type="GO" id="GO:0097602">
    <property type="term" value="F:cullin family protein binding"/>
    <property type="evidence" value="ECO:0000315"/>
    <property type="project" value="UniProtKB"/>
</dbReference>
<dbReference type="GO" id="GO:0031624">
    <property type="term" value="F:ubiquitin conjugating enzyme binding"/>
    <property type="evidence" value="ECO:0000318"/>
    <property type="project" value="GO_Central"/>
</dbReference>
<dbReference type="GO" id="GO:0032182">
    <property type="term" value="F:ubiquitin-like protein binding"/>
    <property type="evidence" value="ECO:0000318"/>
    <property type="project" value="GO_Central"/>
</dbReference>
<dbReference type="GO" id="GO:2000436">
    <property type="term" value="P:positive regulation of protein neddylation"/>
    <property type="evidence" value="ECO:0000315"/>
    <property type="project" value="UniProtKB"/>
</dbReference>
<dbReference type="GO" id="GO:0045116">
    <property type="term" value="P:protein neddylation"/>
    <property type="evidence" value="ECO:0000318"/>
    <property type="project" value="GO_Central"/>
</dbReference>
<dbReference type="GO" id="GO:2000434">
    <property type="term" value="P:regulation of protein neddylation"/>
    <property type="evidence" value="ECO:0000315"/>
    <property type="project" value="UniProtKB"/>
</dbReference>
<dbReference type="GO" id="GO:0031396">
    <property type="term" value="P:regulation of protein ubiquitination"/>
    <property type="evidence" value="ECO:0000315"/>
    <property type="project" value="UniProtKB"/>
</dbReference>
<dbReference type="FunFam" id="1.10.238.10:FF:000030">
    <property type="entry name" value="DCN1-like protein"/>
    <property type="match status" value="1"/>
</dbReference>
<dbReference type="FunFam" id="1.10.238.200:FF:000001">
    <property type="entry name" value="DCN1-like protein"/>
    <property type="match status" value="1"/>
</dbReference>
<dbReference type="FunFam" id="1.10.8.10:FF:000021">
    <property type="entry name" value="DCN1-like protein"/>
    <property type="match status" value="1"/>
</dbReference>
<dbReference type="Gene3D" id="1.10.238.200">
    <property type="entry name" value="Cullin, PONY binding domain"/>
    <property type="match status" value="1"/>
</dbReference>
<dbReference type="Gene3D" id="1.10.8.10">
    <property type="entry name" value="DNA helicase RuvA subunit, C-terminal domain"/>
    <property type="match status" value="1"/>
</dbReference>
<dbReference type="Gene3D" id="1.10.238.10">
    <property type="entry name" value="EF-hand"/>
    <property type="match status" value="1"/>
</dbReference>
<dbReference type="InterPro" id="IPR014764">
    <property type="entry name" value="DCN-prot"/>
</dbReference>
<dbReference type="InterPro" id="IPR042460">
    <property type="entry name" value="DCN1-like_PONY"/>
</dbReference>
<dbReference type="InterPro" id="IPR005176">
    <property type="entry name" value="PONY_dom"/>
</dbReference>
<dbReference type="InterPro" id="IPR009060">
    <property type="entry name" value="UBA-like_sf"/>
</dbReference>
<dbReference type="PANTHER" id="PTHR12281:SF10">
    <property type="entry name" value="DCN1-LIKE PROTEIN 1"/>
    <property type="match status" value="1"/>
</dbReference>
<dbReference type="PANTHER" id="PTHR12281">
    <property type="entry name" value="RP42 RELATED"/>
    <property type="match status" value="1"/>
</dbReference>
<dbReference type="Pfam" id="PF03556">
    <property type="entry name" value="Cullin_binding"/>
    <property type="match status" value="1"/>
</dbReference>
<dbReference type="Pfam" id="PF14555">
    <property type="entry name" value="UBA_4"/>
    <property type="match status" value="1"/>
</dbReference>
<dbReference type="SUPFAM" id="SSF46934">
    <property type="entry name" value="UBA-like"/>
    <property type="match status" value="1"/>
</dbReference>
<dbReference type="PROSITE" id="PS51229">
    <property type="entry name" value="DCUN1"/>
    <property type="match status" value="1"/>
</dbReference>
<sequence length="259" mass="30124">MNKLKSSQKDKVRQFMIFTQSSEKTAVSCLSQNDWKLDVATDNFFQNPELYIRESVKGSLDRKKLEQLYNRYKDPQDENKIGIDGIQQFCDDLALDPASISVLIIAWKFRAATQCEFSKQEFMDGMTELGCDSIEKLKAQIPKMEQELKEPGRFKDFYQFTFNFAKNPGQKGLDLEMAIAYWNLVLNGRFKFLDLWNKFLLEHHKRSIPKDTWNLLLDFSTMIADDMSNYDEEGAWPVLIDDFVEFARPQIAGTKSTTV</sequence>